<dbReference type="EC" id="2.1.1.61" evidence="1"/>
<dbReference type="EC" id="1.5.-.-" evidence="1"/>
<dbReference type="EMBL" id="CP000348">
    <property type="protein sequence ID" value="ABJ80118.1"/>
    <property type="molecule type" value="Genomic_DNA"/>
</dbReference>
<dbReference type="RefSeq" id="WP_011671043.1">
    <property type="nucleotide sequence ID" value="NC_008508.1"/>
</dbReference>
<dbReference type="SMR" id="Q04XS7"/>
<dbReference type="KEGG" id="lbl:LBL_2779"/>
<dbReference type="HOGENOM" id="CLU_022427_1_0_12"/>
<dbReference type="GO" id="GO:0005737">
    <property type="term" value="C:cytoplasm"/>
    <property type="evidence" value="ECO:0007669"/>
    <property type="project" value="UniProtKB-SubCell"/>
</dbReference>
<dbReference type="GO" id="GO:0050660">
    <property type="term" value="F:flavin adenine dinucleotide binding"/>
    <property type="evidence" value="ECO:0007669"/>
    <property type="project" value="UniProtKB-UniRule"/>
</dbReference>
<dbReference type="GO" id="GO:0016645">
    <property type="term" value="F:oxidoreductase activity, acting on the CH-NH group of donors"/>
    <property type="evidence" value="ECO:0007669"/>
    <property type="project" value="InterPro"/>
</dbReference>
<dbReference type="GO" id="GO:0004808">
    <property type="term" value="F:tRNA (5-methylaminomethyl-2-thiouridylate)(34)-methyltransferase activity"/>
    <property type="evidence" value="ECO:0007669"/>
    <property type="project" value="UniProtKB-EC"/>
</dbReference>
<dbReference type="GO" id="GO:0032259">
    <property type="term" value="P:methylation"/>
    <property type="evidence" value="ECO:0007669"/>
    <property type="project" value="UniProtKB-KW"/>
</dbReference>
<dbReference type="GO" id="GO:0002097">
    <property type="term" value="P:tRNA wobble base modification"/>
    <property type="evidence" value="ECO:0007669"/>
    <property type="project" value="UniProtKB-UniRule"/>
</dbReference>
<dbReference type="Gene3D" id="3.30.9.10">
    <property type="entry name" value="D-Amino Acid Oxidase, subunit A, domain 2"/>
    <property type="match status" value="1"/>
</dbReference>
<dbReference type="Gene3D" id="3.50.50.60">
    <property type="entry name" value="FAD/NAD(P)-binding domain"/>
    <property type="match status" value="1"/>
</dbReference>
<dbReference type="Gene3D" id="3.40.50.150">
    <property type="entry name" value="Vaccinia Virus protein VP39"/>
    <property type="match status" value="1"/>
</dbReference>
<dbReference type="HAMAP" id="MF_01102">
    <property type="entry name" value="MnmC"/>
    <property type="match status" value="1"/>
</dbReference>
<dbReference type="InterPro" id="IPR006076">
    <property type="entry name" value="FAD-dep_OxRdtase"/>
</dbReference>
<dbReference type="InterPro" id="IPR036188">
    <property type="entry name" value="FAD/NAD-bd_sf"/>
</dbReference>
<dbReference type="InterPro" id="IPR008471">
    <property type="entry name" value="MnmC-like_methylTransf"/>
</dbReference>
<dbReference type="InterPro" id="IPR029063">
    <property type="entry name" value="SAM-dependent_MTases_sf"/>
</dbReference>
<dbReference type="InterPro" id="IPR023032">
    <property type="entry name" value="tRNA_MAMT_biosynth_bifunc_MnmC"/>
</dbReference>
<dbReference type="InterPro" id="IPR047785">
    <property type="entry name" value="tRNA_MNMC2"/>
</dbReference>
<dbReference type="InterPro" id="IPR017610">
    <property type="entry name" value="tRNA_S-uridine_synth_MnmC_C"/>
</dbReference>
<dbReference type="NCBIfam" id="TIGR03197">
    <property type="entry name" value="MnmC_Cterm"/>
    <property type="match status" value="1"/>
</dbReference>
<dbReference type="NCBIfam" id="NF002481">
    <property type="entry name" value="PRK01747.1-2"/>
    <property type="match status" value="1"/>
</dbReference>
<dbReference type="NCBIfam" id="NF033855">
    <property type="entry name" value="tRNA_MNMC2"/>
    <property type="match status" value="1"/>
</dbReference>
<dbReference type="PANTHER" id="PTHR13847">
    <property type="entry name" value="SARCOSINE DEHYDROGENASE-RELATED"/>
    <property type="match status" value="1"/>
</dbReference>
<dbReference type="PANTHER" id="PTHR13847:SF283">
    <property type="entry name" value="TRNA 5-METHYLAMINOMETHYL-2-THIOURIDINE BIOSYNTHESIS BIFUNCTIONAL PROTEIN MNMC"/>
    <property type="match status" value="1"/>
</dbReference>
<dbReference type="Pfam" id="PF01266">
    <property type="entry name" value="DAO"/>
    <property type="match status" value="1"/>
</dbReference>
<dbReference type="Pfam" id="PF05430">
    <property type="entry name" value="Methyltransf_30"/>
    <property type="match status" value="1"/>
</dbReference>
<dbReference type="SUPFAM" id="SSF54373">
    <property type="entry name" value="FAD-linked reductases, C-terminal domain"/>
    <property type="match status" value="1"/>
</dbReference>
<dbReference type="SUPFAM" id="SSF51905">
    <property type="entry name" value="FAD/NAD(P)-binding domain"/>
    <property type="match status" value="1"/>
</dbReference>
<protein>
    <recommendedName>
        <fullName evidence="1">tRNA 5-methylaminomethyl-2-thiouridine biosynthesis bifunctional protein MnmC</fullName>
        <shortName evidence="1">tRNA mnm(5)s(2)U biosynthesis bifunctional protein</shortName>
    </recommendedName>
    <domain>
        <recommendedName>
            <fullName evidence="1">tRNA (mnm(5)s(2)U34)-methyltransferase</fullName>
            <ecNumber evidence="1">2.1.1.61</ecNumber>
        </recommendedName>
    </domain>
    <domain>
        <recommendedName>
            <fullName evidence="1">FAD-dependent cmnm(5)s(2)U34 oxidoreductase</fullName>
            <ecNumber evidence="1">1.5.-.-</ecNumber>
        </recommendedName>
    </domain>
</protein>
<accession>Q04XS7</accession>
<evidence type="ECO:0000255" key="1">
    <source>
        <dbReference type="HAMAP-Rule" id="MF_01102"/>
    </source>
</evidence>
<reference key="1">
    <citation type="journal article" date="2006" name="Proc. Natl. Acad. Sci. U.S.A.">
        <title>Genome reduction in Leptospira borgpetersenii reflects limited transmission potential.</title>
        <authorList>
            <person name="Bulach D.M."/>
            <person name="Zuerner R.L."/>
            <person name="Wilson P."/>
            <person name="Seemann T."/>
            <person name="McGrath A."/>
            <person name="Cullen P.A."/>
            <person name="Davis J."/>
            <person name="Johnson M."/>
            <person name="Kuczek E."/>
            <person name="Alt D.P."/>
            <person name="Peterson-Burch B."/>
            <person name="Coppel R.L."/>
            <person name="Rood J.I."/>
            <person name="Davies J.K."/>
            <person name="Adler B."/>
        </authorList>
    </citation>
    <scope>NUCLEOTIDE SEQUENCE [LARGE SCALE GENOMIC DNA]</scope>
    <source>
        <strain>L550</strain>
    </source>
</reference>
<feature type="chain" id="PRO_0000347995" description="tRNA 5-methylaminomethyl-2-thiouridine biosynthesis bifunctional protein MnmC">
    <location>
        <begin position="1"/>
        <end position="652"/>
    </location>
</feature>
<feature type="region of interest" description="tRNA (mnm(5)s(2)U34)-methyltransferase">
    <location>
        <begin position="1"/>
        <end position="227"/>
    </location>
</feature>
<feature type="region of interest" description="FAD-dependent cmnm(5)s(2)U34 oxidoreductase">
    <location>
        <begin position="259"/>
        <end position="652"/>
    </location>
</feature>
<keyword id="KW-0963">Cytoplasm</keyword>
<keyword id="KW-0274">FAD</keyword>
<keyword id="KW-0285">Flavoprotein</keyword>
<keyword id="KW-0489">Methyltransferase</keyword>
<keyword id="KW-0511">Multifunctional enzyme</keyword>
<keyword id="KW-0560">Oxidoreductase</keyword>
<keyword id="KW-0949">S-adenosyl-L-methionine</keyword>
<keyword id="KW-0808">Transferase</keyword>
<keyword id="KW-0819">tRNA processing</keyword>
<proteinExistence type="inferred from homology"/>
<comment type="function">
    <text evidence="1">Catalyzes the last two steps in the biosynthesis of 5-methylaminomethyl-2-thiouridine (mnm(5)s(2)U) at the wobble position (U34) in tRNA. Catalyzes the FAD-dependent demodification of cmnm(5)s(2)U34 to nm(5)s(2)U34, followed by the transfer of a methyl group from S-adenosyl-L-methionine to nm(5)s(2)U34, to form mnm(5)s(2)U34.</text>
</comment>
<comment type="catalytic activity">
    <reaction evidence="1">
        <text>5-aminomethyl-2-thiouridine(34) in tRNA + S-adenosyl-L-methionine = 5-methylaminomethyl-2-thiouridine(34) in tRNA + S-adenosyl-L-homocysteine + H(+)</text>
        <dbReference type="Rhea" id="RHEA:19569"/>
        <dbReference type="Rhea" id="RHEA-COMP:10195"/>
        <dbReference type="Rhea" id="RHEA-COMP:10197"/>
        <dbReference type="ChEBI" id="CHEBI:15378"/>
        <dbReference type="ChEBI" id="CHEBI:57856"/>
        <dbReference type="ChEBI" id="CHEBI:59789"/>
        <dbReference type="ChEBI" id="CHEBI:74454"/>
        <dbReference type="ChEBI" id="CHEBI:74455"/>
        <dbReference type="EC" id="2.1.1.61"/>
    </reaction>
</comment>
<comment type="cofactor">
    <cofactor evidence="1">
        <name>FAD</name>
        <dbReference type="ChEBI" id="CHEBI:57692"/>
    </cofactor>
</comment>
<comment type="subcellular location">
    <subcellularLocation>
        <location evidence="1">Cytoplasm</location>
    </subcellularLocation>
</comment>
<comment type="similarity">
    <text evidence="1">In the N-terminal section; belongs to the methyltransferase superfamily. tRNA (mnm(5)s(2)U34)-methyltransferase family.</text>
</comment>
<comment type="similarity">
    <text evidence="1">In the C-terminal section; belongs to the DAO family.</text>
</comment>
<organism>
    <name type="scientific">Leptospira borgpetersenii serovar Hardjo-bovis (strain L550)</name>
    <dbReference type="NCBI Taxonomy" id="355276"/>
    <lineage>
        <taxon>Bacteria</taxon>
        <taxon>Pseudomonadati</taxon>
        <taxon>Spirochaetota</taxon>
        <taxon>Spirochaetia</taxon>
        <taxon>Leptospirales</taxon>
        <taxon>Leptospiraceae</taxon>
        <taxon>Leptospira</taxon>
    </lineage>
</organism>
<name>MNMC_LEPBL</name>
<gene>
    <name evidence="1" type="primary">mnmC</name>
    <name type="ordered locus">LBL_2779</name>
</gene>
<sequence length="652" mass="73702">MLSWKNDLTPVSDRFDDIYFSPENGLEETRHVFIGGNDLPDRWRNSNIQNPFCILELGFGTGLNFFATWKEYLKQDNRFRLHFISVEKFPLSRKEISKAVSAFPELEEIKEEFLSSYQDLIPGMNYFRFLEGKIHLTLFLGDVSDALCEISGKADAIFLDGFAPSKNPEMWEESVLGNLKNVSKFGTTFSTFTVARTVRNSLSYAGFTLEKRPGFGKKREMLTGKYSNYPSETKESLPKEKPWCKRSDPESQIKTATIIGAGIAGSTLAYSLSKRGIQVFLIDPSGIANETSGIPRAISHPHLTKIPGPISLFTLRAFRYALSFLSSFADKDQFGKVGSFHGVTAEMNPERFRKSIENHKLTEEIASWKPNGSDFHKNDPFNKELEEGVLFRNGFWTRPGSIARKCVDQPGIELIQATANSFERIGSSWKLDLKESDQKVLADSIIFCNSYLIGKLASSLFEGEEIFPINKVRGQLISLKETENSSRVPNILCAEHYLTPSVQGEHVLGSTFDEFDLNPKPRKKDTDLLLQYVQTKYPTLRFDSNCVLSEKTGFRAQTPDRFPIIGPIFDPKIFQETYKEIDLPRNRNKKFPNLKVIPGLYVFGGLGSRGILSSFLGAEILASLILGEPAPVEFSLLESLHPARFLYRRIRK</sequence>